<keyword id="KW-0963">Cytoplasm</keyword>
<keyword id="KW-0448">Lipopolysaccharide biosynthesis</keyword>
<keyword id="KW-1185">Reference proteome</keyword>
<keyword id="KW-0808">Transferase</keyword>
<organism>
    <name type="scientific">Bradyrhizobium sp. (strain BTAi1 / ATCC BAA-1182)</name>
    <dbReference type="NCBI Taxonomy" id="288000"/>
    <lineage>
        <taxon>Bacteria</taxon>
        <taxon>Pseudomonadati</taxon>
        <taxon>Pseudomonadota</taxon>
        <taxon>Alphaproteobacteria</taxon>
        <taxon>Hyphomicrobiales</taxon>
        <taxon>Nitrobacteraceae</taxon>
        <taxon>Bradyrhizobium</taxon>
    </lineage>
</organism>
<evidence type="ECO:0000255" key="1">
    <source>
        <dbReference type="HAMAP-Rule" id="MF_00056"/>
    </source>
</evidence>
<dbReference type="EC" id="2.5.1.55" evidence="1"/>
<dbReference type="EMBL" id="CP000494">
    <property type="protein sequence ID" value="ABQ36510.1"/>
    <property type="molecule type" value="Genomic_DNA"/>
</dbReference>
<dbReference type="RefSeq" id="WP_012044506.1">
    <property type="nucleotide sequence ID" value="NC_009485.1"/>
</dbReference>
<dbReference type="SMR" id="A5EK16"/>
<dbReference type="STRING" id="288000.BBta_4474"/>
<dbReference type="KEGG" id="bbt:BBta_4474"/>
<dbReference type="eggNOG" id="COG2877">
    <property type="taxonomic scope" value="Bacteria"/>
</dbReference>
<dbReference type="HOGENOM" id="CLU_036666_0_0_5"/>
<dbReference type="OrthoDB" id="9776934at2"/>
<dbReference type="UniPathway" id="UPA00030"/>
<dbReference type="UniPathway" id="UPA00357">
    <property type="reaction ID" value="UER00474"/>
</dbReference>
<dbReference type="Proteomes" id="UP000000246">
    <property type="component" value="Chromosome"/>
</dbReference>
<dbReference type="GO" id="GO:0005737">
    <property type="term" value="C:cytoplasm"/>
    <property type="evidence" value="ECO:0007669"/>
    <property type="project" value="UniProtKB-SubCell"/>
</dbReference>
<dbReference type="GO" id="GO:0008676">
    <property type="term" value="F:3-deoxy-8-phosphooctulonate synthase activity"/>
    <property type="evidence" value="ECO:0007669"/>
    <property type="project" value="UniProtKB-UniRule"/>
</dbReference>
<dbReference type="GO" id="GO:0019294">
    <property type="term" value="P:keto-3-deoxy-D-manno-octulosonic acid biosynthetic process"/>
    <property type="evidence" value="ECO:0007669"/>
    <property type="project" value="UniProtKB-UniRule"/>
</dbReference>
<dbReference type="Gene3D" id="3.20.20.70">
    <property type="entry name" value="Aldolase class I"/>
    <property type="match status" value="1"/>
</dbReference>
<dbReference type="HAMAP" id="MF_00056">
    <property type="entry name" value="KDO8P_synth"/>
    <property type="match status" value="1"/>
</dbReference>
<dbReference type="InterPro" id="IPR013785">
    <property type="entry name" value="Aldolase_TIM"/>
</dbReference>
<dbReference type="InterPro" id="IPR006218">
    <property type="entry name" value="DAHP1/KDSA"/>
</dbReference>
<dbReference type="InterPro" id="IPR006269">
    <property type="entry name" value="KDO8P_synthase"/>
</dbReference>
<dbReference type="NCBIfam" id="TIGR01362">
    <property type="entry name" value="KDO8P_synth"/>
    <property type="match status" value="1"/>
</dbReference>
<dbReference type="NCBIfam" id="NF003543">
    <property type="entry name" value="PRK05198.1"/>
    <property type="match status" value="1"/>
</dbReference>
<dbReference type="PANTHER" id="PTHR21057">
    <property type="entry name" value="PHOSPHO-2-DEHYDRO-3-DEOXYHEPTONATE ALDOLASE"/>
    <property type="match status" value="1"/>
</dbReference>
<dbReference type="Pfam" id="PF00793">
    <property type="entry name" value="DAHP_synth_1"/>
    <property type="match status" value="1"/>
</dbReference>
<dbReference type="SUPFAM" id="SSF51569">
    <property type="entry name" value="Aldolase"/>
    <property type="match status" value="1"/>
</dbReference>
<accession>A5EK16</accession>
<gene>
    <name evidence="1" type="primary">kdsA</name>
    <name type="ordered locus">BBta_4474</name>
</gene>
<protein>
    <recommendedName>
        <fullName evidence="1">2-dehydro-3-deoxyphosphooctonate aldolase</fullName>
        <ecNumber evidence="1">2.5.1.55</ecNumber>
    </recommendedName>
    <alternativeName>
        <fullName evidence="1">3-deoxy-D-manno-octulosonic acid 8-phosphate synthase</fullName>
    </alternativeName>
    <alternativeName>
        <fullName evidence="1">KDO-8-phosphate synthase</fullName>
        <shortName evidence="1">KDO 8-P synthase</shortName>
        <shortName evidence="1">KDOPS</shortName>
    </alternativeName>
    <alternativeName>
        <fullName evidence="1">Phospho-2-dehydro-3-deoxyoctonate aldolase</fullName>
    </alternativeName>
</protein>
<reference key="1">
    <citation type="journal article" date="2007" name="Science">
        <title>Legumes symbioses: absence of nod genes in photosynthetic bradyrhizobia.</title>
        <authorList>
            <person name="Giraud E."/>
            <person name="Moulin L."/>
            <person name="Vallenet D."/>
            <person name="Barbe V."/>
            <person name="Cytryn E."/>
            <person name="Avarre J.-C."/>
            <person name="Jaubert M."/>
            <person name="Simon D."/>
            <person name="Cartieaux F."/>
            <person name="Prin Y."/>
            <person name="Bena G."/>
            <person name="Hannibal L."/>
            <person name="Fardoux J."/>
            <person name="Kojadinovic M."/>
            <person name="Vuillet L."/>
            <person name="Lajus A."/>
            <person name="Cruveiller S."/>
            <person name="Rouy Z."/>
            <person name="Mangenot S."/>
            <person name="Segurens B."/>
            <person name="Dossat C."/>
            <person name="Franck W.L."/>
            <person name="Chang W.-S."/>
            <person name="Saunders E."/>
            <person name="Bruce D."/>
            <person name="Richardson P."/>
            <person name="Normand P."/>
            <person name="Dreyfus B."/>
            <person name="Pignol D."/>
            <person name="Stacey G."/>
            <person name="Emerich D."/>
            <person name="Vermeglio A."/>
            <person name="Medigue C."/>
            <person name="Sadowsky M."/>
        </authorList>
    </citation>
    <scope>NUCLEOTIDE SEQUENCE [LARGE SCALE GENOMIC DNA]</scope>
    <source>
        <strain>BTAi1 / ATCC BAA-1182</strain>
    </source>
</reference>
<comment type="catalytic activity">
    <reaction evidence="1">
        <text>D-arabinose 5-phosphate + phosphoenolpyruvate + H2O = 3-deoxy-alpha-D-manno-2-octulosonate-8-phosphate + phosphate</text>
        <dbReference type="Rhea" id="RHEA:14053"/>
        <dbReference type="ChEBI" id="CHEBI:15377"/>
        <dbReference type="ChEBI" id="CHEBI:43474"/>
        <dbReference type="ChEBI" id="CHEBI:57693"/>
        <dbReference type="ChEBI" id="CHEBI:58702"/>
        <dbReference type="ChEBI" id="CHEBI:85985"/>
        <dbReference type="EC" id="2.5.1.55"/>
    </reaction>
</comment>
<comment type="pathway">
    <text evidence="1">Carbohydrate biosynthesis; 3-deoxy-D-manno-octulosonate biosynthesis; 3-deoxy-D-manno-octulosonate from D-ribulose 5-phosphate: step 2/3.</text>
</comment>
<comment type="pathway">
    <text evidence="1">Bacterial outer membrane biogenesis; lipopolysaccharide biosynthesis.</text>
</comment>
<comment type="subcellular location">
    <subcellularLocation>
        <location evidence="1">Cytoplasm</location>
    </subcellularLocation>
</comment>
<comment type="similarity">
    <text evidence="1">Belongs to the KdsA family.</text>
</comment>
<name>KDSA_BRASB</name>
<proteinExistence type="inferred from homology"/>
<sequence>MTTAATAAAIVTAGSVRFGNDLPLAVIAGPCQLESRGHALEVASALKEIATRLNIGLVYKTSFDKANRTSGSAARGLGLAQSLPIFAEIRSSLGLPVLTDIHDASQCAEVAQAVDVLQIPAFLCRQTDLLLAAAATGKVVNVKKGQFLAPWDMANVVAKITGAGNPNVLATERGVSFGYNTLISDMRSLPIMARTTGAPVIFDATHSVQQPGGQGTSSGGQREFVPVLARAAVAVGVAGVFIETHPDPDHAPSDGPNMVPLAEFEGLLRRLMAFDKLAKAPATDTR</sequence>
<feature type="chain" id="PRO_0000304433" description="2-dehydro-3-deoxyphosphooctonate aldolase">
    <location>
        <begin position="1"/>
        <end position="286"/>
    </location>
</feature>